<keyword id="KW-0150">Chloroplast</keyword>
<keyword id="KW-0472">Membrane</keyword>
<keyword id="KW-0602">Photosynthesis</keyword>
<keyword id="KW-0934">Plastid</keyword>
<keyword id="KW-0677">Repeat</keyword>
<keyword id="KW-0793">Thylakoid</keyword>
<keyword id="KW-0802">TPR repeat</keyword>
<organism>
    <name type="scientific">Trieres chinensis</name>
    <name type="common">Marine centric diatom</name>
    <name type="synonym">Odontella sinensis</name>
    <dbReference type="NCBI Taxonomy" id="1514140"/>
    <lineage>
        <taxon>Eukaryota</taxon>
        <taxon>Sar</taxon>
        <taxon>Stramenopiles</taxon>
        <taxon>Ochrophyta</taxon>
        <taxon>Bacillariophyta</taxon>
        <taxon>Mediophyceae</taxon>
        <taxon>Biddulphiophycidae</taxon>
        <taxon>Eupodiscales</taxon>
        <taxon>Parodontellaceae</taxon>
        <taxon>Trieres</taxon>
    </lineage>
</organism>
<protein>
    <recommendedName>
        <fullName evidence="1">Photosystem I assembly protein Ycf3</fullName>
    </recommendedName>
</protein>
<accession>P49525</accession>
<geneLocation type="chloroplast"/>
<proteinExistence type="inferred from homology"/>
<reference key="1">
    <citation type="journal article" date="1995" name="Plant Mol. Biol. Rep.">
        <title>The chloroplast genome of a chlorophyll a+c-containing alga, Odontella sinensis.</title>
        <authorList>
            <person name="Kowallik K.V."/>
            <person name="Stoebe B."/>
            <person name="Schaffran I."/>
            <person name="Kroth-Pancic P."/>
            <person name="Freier U."/>
        </authorList>
    </citation>
    <scope>NUCLEOTIDE SEQUENCE [LARGE SCALE GENOMIC DNA]</scope>
</reference>
<sequence>MSNFIDKTFTVIADILLKVLPASKQEKQAFSYYRAGMSAQSEGKYAEALENYYEALQLEEDPYDRSYTLYNIGLIYGNNGNYSQALEYYHQALELNSNLPQALNNIAVIYHSQGLNALQMQNQDKNLEIRNDEYLELAKEFFDKAAEYWRQALKLAPDNYPGAQNWLKVTGRQISEEYF</sequence>
<comment type="function">
    <text evidence="1">Essential for the assembly of the photosystem I (PSI) complex. May act as a chaperone-like factor to guide the assembly of the PSI subunits.</text>
</comment>
<comment type="subcellular location">
    <subcellularLocation>
        <location evidence="1">Plastid</location>
        <location evidence="1">Chloroplast thylakoid membrane</location>
        <topology evidence="1">Peripheral membrane protein</topology>
    </subcellularLocation>
</comment>
<comment type="similarity">
    <text evidence="1">Belongs to the Ycf3 family.</text>
</comment>
<name>YCF3_TRICV</name>
<feature type="chain" id="PRO_0000217812" description="Photosystem I assembly protein Ycf3">
    <location>
        <begin position="1"/>
        <end position="179"/>
    </location>
</feature>
<feature type="repeat" description="TPR 1">
    <location>
        <begin position="29"/>
        <end position="62"/>
    </location>
</feature>
<feature type="repeat" description="TPR 2">
    <location>
        <begin position="66"/>
        <end position="99"/>
    </location>
</feature>
<feature type="repeat" description="TPR 3">
    <location>
        <begin position="126"/>
        <end position="159"/>
    </location>
</feature>
<evidence type="ECO:0000255" key="1">
    <source>
        <dbReference type="HAMAP-Rule" id="MF_00439"/>
    </source>
</evidence>
<dbReference type="EMBL" id="Z67753">
    <property type="protein sequence ID" value="CAA91740.1"/>
    <property type="molecule type" value="Genomic_DNA"/>
</dbReference>
<dbReference type="PIR" id="S78367">
    <property type="entry name" value="S78367"/>
</dbReference>
<dbReference type="RefSeq" id="NP_043708.1">
    <property type="nucleotide sequence ID" value="NC_001713.1"/>
</dbReference>
<dbReference type="SMR" id="P49525"/>
<dbReference type="GeneID" id="801766"/>
<dbReference type="GO" id="GO:0009535">
    <property type="term" value="C:chloroplast thylakoid membrane"/>
    <property type="evidence" value="ECO:0007669"/>
    <property type="project" value="UniProtKB-SubCell"/>
</dbReference>
<dbReference type="GO" id="GO:0015979">
    <property type="term" value="P:photosynthesis"/>
    <property type="evidence" value="ECO:0007669"/>
    <property type="project" value="UniProtKB-UniRule"/>
</dbReference>
<dbReference type="Gene3D" id="1.25.40.10">
    <property type="entry name" value="Tetratricopeptide repeat domain"/>
    <property type="match status" value="1"/>
</dbReference>
<dbReference type="HAMAP" id="MF_00439">
    <property type="entry name" value="Ycf3"/>
    <property type="match status" value="1"/>
</dbReference>
<dbReference type="InterPro" id="IPR022818">
    <property type="entry name" value="PSI_Ycf3_assembly"/>
</dbReference>
<dbReference type="InterPro" id="IPR011990">
    <property type="entry name" value="TPR-like_helical_dom_sf"/>
</dbReference>
<dbReference type="InterPro" id="IPR019734">
    <property type="entry name" value="TPR_rpt"/>
</dbReference>
<dbReference type="InterPro" id="IPR051685">
    <property type="entry name" value="Ycf3/AcsC/BcsC/TPR_MFPF"/>
</dbReference>
<dbReference type="NCBIfam" id="NF002725">
    <property type="entry name" value="PRK02603.1"/>
    <property type="match status" value="1"/>
</dbReference>
<dbReference type="PANTHER" id="PTHR44943">
    <property type="entry name" value="CELLULOSE SYNTHASE OPERON PROTEIN C"/>
    <property type="match status" value="1"/>
</dbReference>
<dbReference type="PANTHER" id="PTHR44943:SF8">
    <property type="entry name" value="TPR REPEAT-CONTAINING PROTEIN MJ0263"/>
    <property type="match status" value="1"/>
</dbReference>
<dbReference type="Pfam" id="PF00515">
    <property type="entry name" value="TPR_1"/>
    <property type="match status" value="1"/>
</dbReference>
<dbReference type="Pfam" id="PF13181">
    <property type="entry name" value="TPR_8"/>
    <property type="match status" value="1"/>
</dbReference>
<dbReference type="SMART" id="SM00028">
    <property type="entry name" value="TPR"/>
    <property type="match status" value="3"/>
</dbReference>
<dbReference type="SUPFAM" id="SSF48452">
    <property type="entry name" value="TPR-like"/>
    <property type="match status" value="1"/>
</dbReference>
<dbReference type="PROSITE" id="PS50005">
    <property type="entry name" value="TPR"/>
    <property type="match status" value="3"/>
</dbReference>
<dbReference type="PROSITE" id="PS50293">
    <property type="entry name" value="TPR_REGION"/>
    <property type="match status" value="2"/>
</dbReference>
<gene>
    <name evidence="1" type="primary">ycf3</name>
</gene>